<gene>
    <name evidence="1" type="primary">betB</name>
    <name type="ordered locus">PputGB1_5114</name>
</gene>
<dbReference type="EC" id="1.2.1.8" evidence="1"/>
<dbReference type="EMBL" id="CP000926">
    <property type="protein sequence ID" value="ABZ00999.1"/>
    <property type="molecule type" value="Genomic_DNA"/>
</dbReference>
<dbReference type="RefSeq" id="WP_012274617.1">
    <property type="nucleotide sequence ID" value="NC_010322.1"/>
</dbReference>
<dbReference type="SMR" id="B0KN18"/>
<dbReference type="KEGG" id="ppg:PputGB1_5114"/>
<dbReference type="eggNOG" id="COG1012">
    <property type="taxonomic scope" value="Bacteria"/>
</dbReference>
<dbReference type="HOGENOM" id="CLU_005391_0_0_6"/>
<dbReference type="UniPathway" id="UPA00529">
    <property type="reaction ID" value="UER00386"/>
</dbReference>
<dbReference type="Proteomes" id="UP000002157">
    <property type="component" value="Chromosome"/>
</dbReference>
<dbReference type="GO" id="GO:0008802">
    <property type="term" value="F:betaine-aldehyde dehydrogenase (NAD+) activity"/>
    <property type="evidence" value="ECO:0007669"/>
    <property type="project" value="UniProtKB-UniRule"/>
</dbReference>
<dbReference type="GO" id="GO:0046872">
    <property type="term" value="F:metal ion binding"/>
    <property type="evidence" value="ECO:0007669"/>
    <property type="project" value="UniProtKB-KW"/>
</dbReference>
<dbReference type="GO" id="GO:0019285">
    <property type="term" value="P:glycine betaine biosynthetic process from choline"/>
    <property type="evidence" value="ECO:0007669"/>
    <property type="project" value="UniProtKB-UniRule"/>
</dbReference>
<dbReference type="CDD" id="cd07090">
    <property type="entry name" value="ALDH_F9_TMBADH"/>
    <property type="match status" value="1"/>
</dbReference>
<dbReference type="FunFam" id="3.40.309.10:FF:000014">
    <property type="entry name" value="NAD/NADP-dependent betaine aldehyde dehydrogenase"/>
    <property type="match status" value="1"/>
</dbReference>
<dbReference type="FunFam" id="3.40.605.10:FF:000007">
    <property type="entry name" value="NAD/NADP-dependent betaine aldehyde dehydrogenase"/>
    <property type="match status" value="1"/>
</dbReference>
<dbReference type="Gene3D" id="3.40.605.10">
    <property type="entry name" value="Aldehyde Dehydrogenase, Chain A, domain 1"/>
    <property type="match status" value="1"/>
</dbReference>
<dbReference type="Gene3D" id="3.40.309.10">
    <property type="entry name" value="Aldehyde Dehydrogenase, Chain A, domain 2"/>
    <property type="match status" value="1"/>
</dbReference>
<dbReference type="HAMAP" id="MF_00804">
    <property type="entry name" value="BADH"/>
    <property type="match status" value="1"/>
</dbReference>
<dbReference type="InterPro" id="IPR016161">
    <property type="entry name" value="Ald_DH/histidinol_DH"/>
</dbReference>
<dbReference type="InterPro" id="IPR016163">
    <property type="entry name" value="Ald_DH_C"/>
</dbReference>
<dbReference type="InterPro" id="IPR016160">
    <property type="entry name" value="Ald_DH_CS_CYS"/>
</dbReference>
<dbReference type="InterPro" id="IPR029510">
    <property type="entry name" value="Ald_DH_CS_GLU"/>
</dbReference>
<dbReference type="InterPro" id="IPR016162">
    <property type="entry name" value="Ald_DH_N"/>
</dbReference>
<dbReference type="InterPro" id="IPR015590">
    <property type="entry name" value="Aldehyde_DH_dom"/>
</dbReference>
<dbReference type="InterPro" id="IPR011264">
    <property type="entry name" value="BADH"/>
</dbReference>
<dbReference type="NCBIfam" id="TIGR01804">
    <property type="entry name" value="BADH"/>
    <property type="match status" value="1"/>
</dbReference>
<dbReference type="NCBIfam" id="NF009725">
    <property type="entry name" value="PRK13252.1"/>
    <property type="match status" value="1"/>
</dbReference>
<dbReference type="PANTHER" id="PTHR11699">
    <property type="entry name" value="ALDEHYDE DEHYDROGENASE-RELATED"/>
    <property type="match status" value="1"/>
</dbReference>
<dbReference type="Pfam" id="PF00171">
    <property type="entry name" value="Aldedh"/>
    <property type="match status" value="1"/>
</dbReference>
<dbReference type="SUPFAM" id="SSF53720">
    <property type="entry name" value="ALDH-like"/>
    <property type="match status" value="1"/>
</dbReference>
<dbReference type="PROSITE" id="PS00070">
    <property type="entry name" value="ALDEHYDE_DEHYDR_CYS"/>
    <property type="match status" value="1"/>
</dbReference>
<dbReference type="PROSITE" id="PS00687">
    <property type="entry name" value="ALDEHYDE_DEHYDR_GLU"/>
    <property type="match status" value="1"/>
</dbReference>
<organism>
    <name type="scientific">Pseudomonas putida (strain GB-1)</name>
    <dbReference type="NCBI Taxonomy" id="76869"/>
    <lineage>
        <taxon>Bacteria</taxon>
        <taxon>Pseudomonadati</taxon>
        <taxon>Pseudomonadota</taxon>
        <taxon>Gammaproteobacteria</taxon>
        <taxon>Pseudomonadales</taxon>
        <taxon>Pseudomonadaceae</taxon>
        <taxon>Pseudomonas</taxon>
    </lineage>
</organism>
<protein>
    <recommendedName>
        <fullName evidence="1">Betaine aldehyde dehydrogenase</fullName>
        <shortName evidence="1">BADH</shortName>
        <ecNumber evidence="1">1.2.1.8</ecNumber>
    </recommendedName>
</protein>
<name>BETB_PSEPG</name>
<evidence type="ECO:0000255" key="1">
    <source>
        <dbReference type="HAMAP-Rule" id="MF_00804"/>
    </source>
</evidence>
<sequence>MARFGTQKLYIDGAYVDAGSDATFEAINPATGEVLAHVQRATEADVEKAVESAERGQKVWAAMTAMQRSRILRRAVDILRERNDELAQLETLDTGKSYSETRYVDIVTGADVLEYYAGLVPAIEGEQIPLRESSFVYTRREPLGVTVGIGAWNYPIQIALWKSAPALAAGNAMIFKPSEVTSLTTLKLAEIYTEAGLPNGVFNVLTGSGREVGTWLTEHPRIEKVSFTGGTTTGKKVMASASSSSLKEVTMELGGKSPLIICADADLDKAADIAMMANFYSSGQVCTNGTRVFIPAEMKAAFEAKIAERVARIRVGNPEDENTNFGPLVSFAHMENVLSYIAKGKEEGARVLCGGERLTEGEFAKGAFVAPTVFTDCSDDMTIVKEEIFGPVMSILSYETEEEVIRRANDTEYGLAAGVCTNDITRAHRIIHKLEAGICWINAWGESPAEMPVGGYKQSGVGRENGVSSLAQYTRIKSVQVELGGYNSVF</sequence>
<keyword id="KW-0479">Metal-binding</keyword>
<keyword id="KW-0520">NAD</keyword>
<keyword id="KW-0521">NADP</keyword>
<keyword id="KW-0558">Oxidation</keyword>
<keyword id="KW-0560">Oxidoreductase</keyword>
<keyword id="KW-0630">Potassium</keyword>
<proteinExistence type="inferred from homology"/>
<accession>B0KN18</accession>
<reference key="1">
    <citation type="submission" date="2008-01" db="EMBL/GenBank/DDBJ databases">
        <title>Complete sequence of Pseudomonas putida GB-1.</title>
        <authorList>
            <consortium name="US DOE Joint Genome Institute"/>
            <person name="Copeland A."/>
            <person name="Lucas S."/>
            <person name="Lapidus A."/>
            <person name="Barry K."/>
            <person name="Glavina del Rio T."/>
            <person name="Dalin E."/>
            <person name="Tice H."/>
            <person name="Pitluck S."/>
            <person name="Bruce D."/>
            <person name="Goodwin L."/>
            <person name="Chertkov O."/>
            <person name="Brettin T."/>
            <person name="Detter J.C."/>
            <person name="Han C."/>
            <person name="Kuske C.R."/>
            <person name="Schmutz J."/>
            <person name="Larimer F."/>
            <person name="Land M."/>
            <person name="Hauser L."/>
            <person name="Kyrpides N."/>
            <person name="Kim E."/>
            <person name="McCarthy J.K."/>
            <person name="Richardson P."/>
        </authorList>
    </citation>
    <scope>NUCLEOTIDE SEQUENCE [LARGE SCALE GENOMIC DNA]</scope>
    <source>
        <strain>GB-1</strain>
    </source>
</reference>
<feature type="chain" id="PRO_1000083710" description="Betaine aldehyde dehydrogenase">
    <location>
        <begin position="1"/>
        <end position="490"/>
    </location>
</feature>
<feature type="active site" description="Charge relay system" evidence="1">
    <location>
        <position position="162"/>
    </location>
</feature>
<feature type="active site" description="Proton acceptor" evidence="1">
    <location>
        <position position="252"/>
    </location>
</feature>
<feature type="active site" description="Nucleophile" evidence="1">
    <location>
        <position position="286"/>
    </location>
</feature>
<feature type="active site" description="Charge relay system" evidence="1">
    <location>
        <position position="464"/>
    </location>
</feature>
<feature type="binding site" evidence="1">
    <location>
        <position position="27"/>
    </location>
    <ligand>
        <name>K(+)</name>
        <dbReference type="ChEBI" id="CHEBI:29103"/>
        <label>1</label>
    </ligand>
</feature>
<feature type="binding site" evidence="1">
    <location>
        <position position="93"/>
    </location>
    <ligand>
        <name>K(+)</name>
        <dbReference type="ChEBI" id="CHEBI:29103"/>
        <label>1</label>
    </ligand>
</feature>
<feature type="binding site" evidence="1">
    <location>
        <begin position="150"/>
        <end position="152"/>
    </location>
    <ligand>
        <name>NAD(+)</name>
        <dbReference type="ChEBI" id="CHEBI:57540"/>
    </ligand>
</feature>
<feature type="binding site" evidence="1">
    <location>
        <begin position="176"/>
        <end position="179"/>
    </location>
    <ligand>
        <name>NAD(+)</name>
        <dbReference type="ChEBI" id="CHEBI:57540"/>
    </ligand>
</feature>
<feature type="binding site" evidence="1">
    <location>
        <position position="180"/>
    </location>
    <ligand>
        <name>K(+)</name>
        <dbReference type="ChEBI" id="CHEBI:29103"/>
        <label>1</label>
    </ligand>
</feature>
<feature type="binding site" evidence="1">
    <location>
        <begin position="230"/>
        <end position="233"/>
    </location>
    <ligand>
        <name>NAD(+)</name>
        <dbReference type="ChEBI" id="CHEBI:57540"/>
    </ligand>
</feature>
<feature type="binding site" evidence="1">
    <location>
        <position position="246"/>
    </location>
    <ligand>
        <name>K(+)</name>
        <dbReference type="ChEBI" id="CHEBI:29103"/>
        <label>2</label>
    </ligand>
</feature>
<feature type="binding site" evidence="1">
    <location>
        <position position="254"/>
    </location>
    <ligand>
        <name>NAD(+)</name>
        <dbReference type="ChEBI" id="CHEBI:57540"/>
    </ligand>
</feature>
<feature type="binding site" description="covalent" evidence="1">
    <location>
        <position position="286"/>
    </location>
    <ligand>
        <name>NAD(+)</name>
        <dbReference type="ChEBI" id="CHEBI:57540"/>
    </ligand>
</feature>
<feature type="binding site" evidence="1">
    <location>
        <position position="387"/>
    </location>
    <ligand>
        <name>NAD(+)</name>
        <dbReference type="ChEBI" id="CHEBI:57540"/>
    </ligand>
</feature>
<feature type="binding site" evidence="1">
    <location>
        <position position="457"/>
    </location>
    <ligand>
        <name>K(+)</name>
        <dbReference type="ChEBI" id="CHEBI:29103"/>
        <label>2</label>
    </ligand>
</feature>
<feature type="binding site" evidence="1">
    <location>
        <position position="460"/>
    </location>
    <ligand>
        <name>K(+)</name>
        <dbReference type="ChEBI" id="CHEBI:29103"/>
        <label>2</label>
    </ligand>
</feature>
<feature type="site" description="Seems to be a necessary countercharge to the potassium cations" evidence="1">
    <location>
        <position position="248"/>
    </location>
</feature>
<feature type="modified residue" description="Cysteine sulfenic acid (-SOH)" evidence="1">
    <location>
        <position position="286"/>
    </location>
</feature>
<comment type="function">
    <text evidence="1">Involved in the biosynthesis of the osmoprotectant glycine betaine. Catalyzes the irreversible oxidation of betaine aldehyde to the corresponding acid.</text>
</comment>
<comment type="catalytic activity">
    <reaction evidence="1">
        <text>betaine aldehyde + NAD(+) + H2O = glycine betaine + NADH + 2 H(+)</text>
        <dbReference type="Rhea" id="RHEA:15305"/>
        <dbReference type="ChEBI" id="CHEBI:15377"/>
        <dbReference type="ChEBI" id="CHEBI:15378"/>
        <dbReference type="ChEBI" id="CHEBI:15710"/>
        <dbReference type="ChEBI" id="CHEBI:17750"/>
        <dbReference type="ChEBI" id="CHEBI:57540"/>
        <dbReference type="ChEBI" id="CHEBI:57945"/>
        <dbReference type="EC" id="1.2.1.8"/>
    </reaction>
    <physiologicalReaction direction="left-to-right" evidence="1">
        <dbReference type="Rhea" id="RHEA:15306"/>
    </physiologicalReaction>
</comment>
<comment type="cofactor">
    <cofactor evidence="1">
        <name>K(+)</name>
        <dbReference type="ChEBI" id="CHEBI:29103"/>
    </cofactor>
    <text evidence="1">Binds 2 potassium ions per subunit.</text>
</comment>
<comment type="pathway">
    <text evidence="1">Amine and polyamine biosynthesis; betaine biosynthesis via choline pathway; betaine from betaine aldehyde: step 1/1.</text>
</comment>
<comment type="subunit">
    <text evidence="1">Dimer of dimers.</text>
</comment>
<comment type="similarity">
    <text evidence="1">Belongs to the aldehyde dehydrogenase family.</text>
</comment>